<feature type="chain" id="PRO_0000462354" description="Beta-amyrin 28-monooxygenase CYP716A378">
    <location>
        <begin position="1"/>
        <end position="485"/>
    </location>
</feature>
<feature type="transmembrane region" description="Helical; Signal-anchor for type II membrane protein" evidence="2">
    <location>
        <begin position="3"/>
        <end position="23"/>
    </location>
</feature>
<feature type="binding site" description="axial binding residue" evidence="1">
    <location>
        <position position="426"/>
    </location>
    <ligand>
        <name>heme</name>
        <dbReference type="ChEBI" id="CHEBI:30413"/>
    </ligand>
    <ligandPart>
        <name>Fe</name>
        <dbReference type="ChEBI" id="CHEBI:18248"/>
    </ligandPart>
</feature>
<feature type="glycosylation site" description="N-linked (GlcNAc...) asparagine" evidence="3">
    <location>
        <position position="25"/>
    </location>
</feature>
<feature type="glycosylation site" description="N-linked (GlcNAc...) asparagine" evidence="3">
    <location>
        <position position="386"/>
    </location>
</feature>
<sequence>MELFFICGLVLFSTLSLISLFLLHNHSSARGYRLPPGRMGWPFIGESYEFLANGWKGYPEKFIFSRLAKYKPNQVFKTSILGEKVAVMCGATCNKFLFSNEGKLVNAWWPNSVNKIFPSSTQTSSKEEAKKMRKLLPTFFKPEALQRYIPIMDEIAIRHMEDEWEGKSKIEVFPLAKRYTFWLACRLFLSIDDPVHVAKFADPFNDIASGIISIPIDLPGTPFNRGIKASNVVRQELKTIIKQRKLDLSDNKASPTQDILSHMLLTPDEDGRYMNELDIADKILGLLIGGHDTASAACTFVVKFLAELPHIYDGVYKEQMEIAKSKKEGERLNWEDIQKMKYSWNVACEVMRLAPPLQGAFREALSDFMYAGFQIPKGWKLYWSANSTHRNPECFPEPEKFDPARFDGSGPAPYTYVPFGGGPRMCPGKEYARLEILVFMHNIVKRFKWEKLIPDETIVVNPMPTPAKGLPVRLRPHSKPVTVSA</sequence>
<organism>
    <name type="scientific">Saponaria officinalis</name>
    <name type="common">Common soapwort</name>
    <name type="synonym">Lychnis saponaria</name>
    <dbReference type="NCBI Taxonomy" id="3572"/>
    <lineage>
        <taxon>Eukaryota</taxon>
        <taxon>Viridiplantae</taxon>
        <taxon>Streptophyta</taxon>
        <taxon>Embryophyta</taxon>
        <taxon>Tracheophyta</taxon>
        <taxon>Spermatophyta</taxon>
        <taxon>Magnoliopsida</taxon>
        <taxon>eudicotyledons</taxon>
        <taxon>Gunneridae</taxon>
        <taxon>Pentapetalae</taxon>
        <taxon>Caryophyllales</taxon>
        <taxon>Caryophyllaceae</taxon>
        <taxon>Caryophylleae</taxon>
        <taxon>Saponaria</taxon>
    </lineage>
</organism>
<protein>
    <recommendedName>
        <fullName evidence="6">Beta-amyrin 28-monooxygenase CYP716A378</fullName>
        <ecNumber evidence="4">1.14.14.126</ecNumber>
    </recommendedName>
    <alternativeName>
        <fullName evidence="5">Cytochrome P450 716A378</fullName>
        <shortName evidence="5">SoCYP716A378</shortName>
    </alternativeName>
</protein>
<reference evidence="8" key="1">
    <citation type="journal article" date="2025" name="Nat. Chem. Biol.">
        <title>Unlocking saponin biosynthesis in soapwort.</title>
        <authorList>
            <person name="Jo S."/>
            <person name="El-Demerdash A."/>
            <person name="Owen C."/>
            <person name="Srivastava V."/>
            <person name="Wu D."/>
            <person name="Kikuchi S."/>
            <person name="Reed J."/>
            <person name="Hodgson H."/>
            <person name="Harkess A."/>
            <person name="Shu S."/>
            <person name="Plott C."/>
            <person name="Jenkins J."/>
            <person name="Williams M."/>
            <person name="Boston L.-B."/>
            <person name="Lacchini E."/>
            <person name="Qu T."/>
            <person name="Goossens A."/>
            <person name="Grimwood J."/>
            <person name="Schmutz J."/>
            <person name="Leebens-Mack J."/>
            <person name="Osbourn A."/>
        </authorList>
    </citation>
    <scope>NUCLEOTIDE SEQUENCE [MRNA]</scope>
    <scope>FUNCTION</scope>
    <scope>CATALYTIC ACTIVITY</scope>
    <scope>TISSUE SPECIFICITY</scope>
    <scope>PATHWAY</scope>
    <scope>BIOTECHNOLOGY</scope>
</reference>
<reference evidence="7" key="2">
    <citation type="submission" date="2024-03" db="EMBL/GenBank/DDBJ databases">
        <title>WGS assembly of Saponaria officinalis var. Norfolk2.</title>
        <authorList>
            <person name="Jenkins J."/>
            <person name="Shu S."/>
            <person name="Grimwood J."/>
            <person name="Barry K."/>
            <person name="Goodstein D."/>
            <person name="Schmutz J."/>
            <person name="Leebens-Mack J."/>
            <person name="Osbourn A."/>
        </authorList>
    </citation>
    <scope>NUCLEOTIDE SEQUENCE [LARGE SCALE GENOMIC DNA]</scope>
    <source>
        <strain>cv. Norfolk2</strain>
        <tissue>Leaf</tissue>
    </source>
</reference>
<accession>A0AAW1NEA3</accession>
<comment type="function">
    <text evidence="4">Component of the oleanane-type triterpene saponins (e.g. saponarioside A and saponarioside B) biosynthetic pathway, leading to the production of natural products with detergent properties used as traditional sources of soap (PubMed:39043959). An oxidoreductase that facilitates the oxidation of the methyl group to a carboxyl group at the C-28 position of beta-amyrin, resulting in the formation of oleanolate (PubMed:39043959).</text>
</comment>
<comment type="catalytic activity">
    <reaction evidence="4">
        <text>beta-amyrin + 3 reduced [NADPH--hemoprotein reductase] + 3 O2 = oleanolate + 3 oxidized [NADPH--hemoprotein reductase] + 4 H2O + 4 H(+)</text>
        <dbReference type="Rhea" id="RHEA:43068"/>
        <dbReference type="Rhea" id="RHEA-COMP:11964"/>
        <dbReference type="Rhea" id="RHEA-COMP:11965"/>
        <dbReference type="ChEBI" id="CHEBI:10352"/>
        <dbReference type="ChEBI" id="CHEBI:15377"/>
        <dbReference type="ChEBI" id="CHEBI:15378"/>
        <dbReference type="ChEBI" id="CHEBI:15379"/>
        <dbReference type="ChEBI" id="CHEBI:57618"/>
        <dbReference type="ChEBI" id="CHEBI:58210"/>
        <dbReference type="ChEBI" id="CHEBI:82828"/>
        <dbReference type="EC" id="1.14.14.126"/>
    </reaction>
    <physiologicalReaction direction="left-to-right" evidence="4">
        <dbReference type="Rhea" id="RHEA:43069"/>
    </physiologicalReaction>
</comment>
<comment type="cofactor">
    <cofactor evidence="1">
        <name>heme</name>
        <dbReference type="ChEBI" id="CHEBI:30413"/>
    </cofactor>
</comment>
<comment type="pathway">
    <text evidence="4">Secondary metabolite biosynthesis; terpenoid biosynthesis.</text>
</comment>
<comment type="subcellular location">
    <subcellularLocation>
        <location evidence="2">Membrane</location>
        <topology evidence="2">Single-pass type II membrane protein</topology>
    </subcellularLocation>
</comment>
<comment type="tissue specificity">
    <text evidence="4">Mainly expressed in flowers and flower buds, to a lesser extent in young leaves and, at low levels, in old leaves, stems and roots.</text>
</comment>
<comment type="biotechnology">
    <text evidence="5">Soapwort saponins possess anticancer properties and are also being explored as enhancers for endosomal escape in targeted tumor therapies (PubMed:39043959). They may also serve as precursors for vaccine adjuvants (PubMed:39043959).</text>
</comment>
<comment type="similarity">
    <text evidence="6">Belongs to the cytochrome P450 family.</text>
</comment>
<name>C7168_SAPOF</name>
<dbReference type="EC" id="1.14.14.126" evidence="4"/>
<dbReference type="EMBL" id="OR426395">
    <property type="protein sequence ID" value="WWM48148.1"/>
    <property type="molecule type" value="mRNA"/>
</dbReference>
<dbReference type="EMBL" id="JBDFQZ010000001">
    <property type="protein sequence ID" value="KAK9757076.1"/>
    <property type="molecule type" value="Genomic_DNA"/>
</dbReference>
<dbReference type="UniPathway" id="UPA00213"/>
<dbReference type="Proteomes" id="UP001443914">
    <property type="component" value="Unassembled WGS sequence"/>
</dbReference>
<dbReference type="GO" id="GO:0016020">
    <property type="term" value="C:membrane"/>
    <property type="evidence" value="ECO:0007669"/>
    <property type="project" value="UniProtKB-SubCell"/>
</dbReference>
<dbReference type="GO" id="GO:0102373">
    <property type="term" value="F:beta-amyrin 28-monooxygenase activity"/>
    <property type="evidence" value="ECO:0000314"/>
    <property type="project" value="UniProtKB"/>
</dbReference>
<dbReference type="GO" id="GO:0020037">
    <property type="term" value="F:heme binding"/>
    <property type="evidence" value="ECO:0007669"/>
    <property type="project" value="InterPro"/>
</dbReference>
<dbReference type="GO" id="GO:0005506">
    <property type="term" value="F:iron ion binding"/>
    <property type="evidence" value="ECO:0007669"/>
    <property type="project" value="InterPro"/>
</dbReference>
<dbReference type="GO" id="GO:0004497">
    <property type="term" value="F:monooxygenase activity"/>
    <property type="evidence" value="ECO:0000314"/>
    <property type="project" value="UniProtKB"/>
</dbReference>
<dbReference type="GO" id="GO:0016135">
    <property type="term" value="P:saponin biosynthetic process"/>
    <property type="evidence" value="ECO:0000314"/>
    <property type="project" value="UniProtKB"/>
</dbReference>
<dbReference type="GO" id="GO:0016125">
    <property type="term" value="P:sterol metabolic process"/>
    <property type="evidence" value="ECO:0007669"/>
    <property type="project" value="TreeGrafter"/>
</dbReference>
<dbReference type="GO" id="GO:0016104">
    <property type="term" value="P:triterpenoid biosynthetic process"/>
    <property type="evidence" value="ECO:0000314"/>
    <property type="project" value="UniProtKB"/>
</dbReference>
<dbReference type="CDD" id="cd11043">
    <property type="entry name" value="CYP90-like"/>
    <property type="match status" value="1"/>
</dbReference>
<dbReference type="FunFam" id="1.10.630.10:FF:000022">
    <property type="entry name" value="Taxadiene 5-alpha hydroxylase"/>
    <property type="match status" value="1"/>
</dbReference>
<dbReference type="Gene3D" id="1.10.630.10">
    <property type="entry name" value="Cytochrome P450"/>
    <property type="match status" value="1"/>
</dbReference>
<dbReference type="InterPro" id="IPR001128">
    <property type="entry name" value="Cyt_P450"/>
</dbReference>
<dbReference type="InterPro" id="IPR017972">
    <property type="entry name" value="Cyt_P450_CS"/>
</dbReference>
<dbReference type="InterPro" id="IPR002401">
    <property type="entry name" value="Cyt_P450_E_grp-I"/>
</dbReference>
<dbReference type="InterPro" id="IPR036396">
    <property type="entry name" value="Cyt_P450_sf"/>
</dbReference>
<dbReference type="PANTHER" id="PTHR24286">
    <property type="entry name" value="CYTOCHROME P450 26"/>
    <property type="match status" value="1"/>
</dbReference>
<dbReference type="PANTHER" id="PTHR24286:SF349">
    <property type="entry name" value="CYTOCHROME P450 716A1-RELATED"/>
    <property type="match status" value="1"/>
</dbReference>
<dbReference type="Pfam" id="PF00067">
    <property type="entry name" value="p450"/>
    <property type="match status" value="1"/>
</dbReference>
<dbReference type="PRINTS" id="PR00463">
    <property type="entry name" value="EP450I"/>
</dbReference>
<dbReference type="PRINTS" id="PR00385">
    <property type="entry name" value="P450"/>
</dbReference>
<dbReference type="SUPFAM" id="SSF48264">
    <property type="entry name" value="Cytochrome P450"/>
    <property type="match status" value="1"/>
</dbReference>
<dbReference type="PROSITE" id="PS00086">
    <property type="entry name" value="CYTOCHROME_P450"/>
    <property type="match status" value="1"/>
</dbReference>
<proteinExistence type="evidence at protein level"/>
<keyword id="KW-0325">Glycoprotein</keyword>
<keyword id="KW-0349">Heme</keyword>
<keyword id="KW-0408">Iron</keyword>
<keyword id="KW-0472">Membrane</keyword>
<keyword id="KW-0479">Metal-binding</keyword>
<keyword id="KW-0503">Monooxygenase</keyword>
<keyword id="KW-0560">Oxidoreductase</keyword>
<keyword id="KW-0735">Signal-anchor</keyword>
<keyword id="KW-0812">Transmembrane</keyword>
<keyword id="KW-1133">Transmembrane helix</keyword>
<evidence type="ECO:0000250" key="1">
    <source>
        <dbReference type="UniProtKB" id="Q94IP1"/>
    </source>
</evidence>
<evidence type="ECO:0000255" key="2"/>
<evidence type="ECO:0000255" key="3">
    <source>
        <dbReference type="PROSITE-ProRule" id="PRU00498"/>
    </source>
</evidence>
<evidence type="ECO:0000269" key="4">
    <source>
    </source>
</evidence>
<evidence type="ECO:0000303" key="5">
    <source>
    </source>
</evidence>
<evidence type="ECO:0000305" key="6"/>
<evidence type="ECO:0000312" key="7">
    <source>
        <dbReference type="EMBL" id="KAK9757076.1"/>
    </source>
</evidence>
<evidence type="ECO:0000312" key="8">
    <source>
        <dbReference type="EMBL" id="WWM48148.1"/>
    </source>
</evidence>
<gene>
    <name evidence="5" type="primary">CYP716A378</name>
    <name evidence="5" type="synonym">Saoffv11003497m</name>
    <name evidence="7" type="ORF">RND81_01G137900</name>
</gene>